<dbReference type="EMBL" id="FN595749">
    <property type="protein sequence ID" value="CCB50343.1"/>
    <property type="molecule type" value="Genomic_DNA"/>
</dbReference>
<dbReference type="EMBL" id="FN597023">
    <property type="status" value="NOT_ANNOTATED_CDS"/>
    <property type="molecule type" value="Genomic_DNA"/>
</dbReference>
<dbReference type="EMBL" id="EC964015">
    <property type="status" value="NOT_ANNOTATED_CDS"/>
    <property type="molecule type" value="mRNA"/>
</dbReference>
<dbReference type="RefSeq" id="XP_002276229.1">
    <property type="nucleotide sequence ID" value="XM_002276193.4"/>
</dbReference>
<dbReference type="SMR" id="A7NW79"/>
<dbReference type="FunCoup" id="A7NW79">
    <property type="interactions" value="20"/>
</dbReference>
<dbReference type="STRING" id="29760.A7NW79"/>
<dbReference type="PaxDb" id="29760-VIT_05s0020g01830.t01"/>
<dbReference type="EnsemblPlants" id="Vitvi05g01858_t001">
    <property type="protein sequence ID" value="Vitvi05g01858_P001"/>
    <property type="gene ID" value="Vitvi05g01858"/>
</dbReference>
<dbReference type="Gramene" id="Vitvi05g01858_t001">
    <property type="protein sequence ID" value="Vitvi05g01858_P001"/>
    <property type="gene ID" value="Vitvi05g01858"/>
</dbReference>
<dbReference type="eggNOG" id="ENOG502S2UF">
    <property type="taxonomic scope" value="Eukaryota"/>
</dbReference>
<dbReference type="HOGENOM" id="CLU_066104_1_2_1"/>
<dbReference type="InParanoid" id="A7NW79"/>
<dbReference type="OrthoDB" id="1926504at2759"/>
<dbReference type="Proteomes" id="UP000009183">
    <property type="component" value="Chromosome 5"/>
</dbReference>
<dbReference type="Proteomes" id="UP000009183">
    <property type="component" value="Chromosome 5, unordered"/>
</dbReference>
<dbReference type="GO" id="GO:0005886">
    <property type="term" value="C:plasma membrane"/>
    <property type="evidence" value="ECO:0007669"/>
    <property type="project" value="UniProtKB-SubCell"/>
</dbReference>
<dbReference type="InterPro" id="IPR006459">
    <property type="entry name" value="CASP/CASPL"/>
</dbReference>
<dbReference type="InterPro" id="IPR006702">
    <property type="entry name" value="CASP_dom"/>
</dbReference>
<dbReference type="InterPro" id="IPR044173">
    <property type="entry name" value="CASPL"/>
</dbReference>
<dbReference type="NCBIfam" id="TIGR01569">
    <property type="entry name" value="A_tha_TIGR01569"/>
    <property type="match status" value="1"/>
</dbReference>
<dbReference type="PANTHER" id="PTHR36488">
    <property type="entry name" value="CASP-LIKE PROTEIN 1U1"/>
    <property type="match status" value="1"/>
</dbReference>
<dbReference type="PANTHER" id="PTHR36488:SF8">
    <property type="entry name" value="CASP-LIKE PROTEIN 1U1"/>
    <property type="match status" value="1"/>
</dbReference>
<dbReference type="Pfam" id="PF04535">
    <property type="entry name" value="CASP_dom"/>
    <property type="match status" value="1"/>
</dbReference>
<dbReference type="SUPFAM" id="SSF101447">
    <property type="entry name" value="Formin homology 2 domain (FH2 domain)"/>
    <property type="match status" value="1"/>
</dbReference>
<gene>
    <name type="ordered locus">VIT_05s0020g01830</name>
    <name type="ORF">GSVIVT00019814001</name>
    <name type="ORF">GSVIVT01017796001</name>
    <name type="ORF">VIT_00017796001</name>
    <name type="ORF">Vv05s0020g01830</name>
</gene>
<accession>A7NW79</accession>
<accession>F6HDH3</accession>
<evidence type="ECO:0000250" key="1"/>
<evidence type="ECO:0000255" key="2"/>
<evidence type="ECO:0000256" key="3">
    <source>
        <dbReference type="SAM" id="MobiDB-lite"/>
    </source>
</evidence>
<evidence type="ECO:0000305" key="4"/>
<organism>
    <name type="scientific">Vitis vinifera</name>
    <name type="common">Grape</name>
    <dbReference type="NCBI Taxonomy" id="29760"/>
    <lineage>
        <taxon>Eukaryota</taxon>
        <taxon>Viridiplantae</taxon>
        <taxon>Streptophyta</taxon>
        <taxon>Embryophyta</taxon>
        <taxon>Tracheophyta</taxon>
        <taxon>Spermatophyta</taxon>
        <taxon>Magnoliopsida</taxon>
        <taxon>eudicotyledons</taxon>
        <taxon>Gunneridae</taxon>
        <taxon>Pentapetalae</taxon>
        <taxon>rosids</taxon>
        <taxon>Vitales</taxon>
        <taxon>Vitaceae</taxon>
        <taxon>Viteae</taxon>
        <taxon>Vitis</taxon>
    </lineage>
</organism>
<sequence length="208" mass="21782">MSSVDTEKPAPPPLETEAPPPPPPPPPPPPPPPPPPAGYSALDVVLRILLLGSAVASVVVMVTSVQTKLIAVAGVPVLVSNKAKFQNSPAFIYFVAALSVVGLYSIITTLASFIFISKPSCSTKTILHLAIWDVLMLGLAASATGTAGGVAYVGLKGNSHVGWNKVCNTYDKFCRHVGGSIAVALFASILLVLLVWLSLFTLYSRIRK</sequence>
<name>CSPL7_VITVI</name>
<protein>
    <recommendedName>
        <fullName>CASP-like protein 1D1</fullName>
        <shortName>VvCASPL1D1</shortName>
    </recommendedName>
</protein>
<proteinExistence type="evidence at transcript level"/>
<keyword id="KW-1003">Cell membrane</keyword>
<keyword id="KW-0472">Membrane</keyword>
<keyword id="KW-1185">Reference proteome</keyword>
<keyword id="KW-0812">Transmembrane</keyword>
<keyword id="KW-1133">Transmembrane helix</keyword>
<reference key="1">
    <citation type="journal article" date="2007" name="Nature">
        <title>The grapevine genome sequence suggests ancestral hexaploidization in major angiosperm phyla.</title>
        <authorList>
            <person name="Jaillon O."/>
            <person name="Aury J.-M."/>
            <person name="Noel B."/>
            <person name="Policriti A."/>
            <person name="Clepet C."/>
            <person name="Casagrande A."/>
            <person name="Choisne N."/>
            <person name="Aubourg S."/>
            <person name="Vitulo N."/>
            <person name="Jubin C."/>
            <person name="Vezzi A."/>
            <person name="Legeai F."/>
            <person name="Hugueney P."/>
            <person name="Dasilva C."/>
            <person name="Horner D."/>
            <person name="Mica E."/>
            <person name="Jublot D."/>
            <person name="Poulain J."/>
            <person name="Bruyere C."/>
            <person name="Billault A."/>
            <person name="Segurens B."/>
            <person name="Gouyvenoux M."/>
            <person name="Ugarte E."/>
            <person name="Cattonaro F."/>
            <person name="Anthouard V."/>
            <person name="Vico V."/>
            <person name="Del Fabbro C."/>
            <person name="Alaux M."/>
            <person name="Di Gaspero G."/>
            <person name="Dumas V."/>
            <person name="Felice N."/>
            <person name="Paillard S."/>
            <person name="Juman I."/>
            <person name="Moroldo M."/>
            <person name="Scalabrin S."/>
            <person name="Canaguier A."/>
            <person name="Le Clainche I."/>
            <person name="Malacrida G."/>
            <person name="Durand E."/>
            <person name="Pesole G."/>
            <person name="Laucou V."/>
            <person name="Chatelet P."/>
            <person name="Merdinoglu D."/>
            <person name="Delledonne M."/>
            <person name="Pezzotti M."/>
            <person name="Lecharny A."/>
            <person name="Scarpelli C."/>
            <person name="Artiguenave F."/>
            <person name="Pe M.E."/>
            <person name="Valle G."/>
            <person name="Morgante M."/>
            <person name="Caboche M."/>
            <person name="Adam-Blondon A.-F."/>
            <person name="Weissenbach J."/>
            <person name="Quetier F."/>
            <person name="Wincker P."/>
        </authorList>
    </citation>
    <scope>NUCLEOTIDE SEQUENCE [LARGE SCALE GENOMIC DNA]</scope>
    <source>
        <strain>cv. Pinot noir / PN40024</strain>
    </source>
</reference>
<reference key="2">
    <citation type="submission" date="2006-07" db="EMBL/GenBank/DDBJ databases">
        <title>Expressed sequence tags from grapevine (Vitis vinifera cv. Cabernet Sauvignon).</title>
        <authorList>
            <person name="Reid K.E."/>
            <person name="Liao N."/>
            <person name="Peng F."/>
            <person name="Schlosser J."/>
            <person name="Kirkpatrick R."/>
            <person name="Shukin R."/>
            <person name="Barber S."/>
            <person name="Holt R."/>
            <person name="Siddiqui A."/>
            <person name="Jones S."/>
            <person name="Marra M."/>
            <person name="Bowen P."/>
            <person name="Bohlmann J."/>
            <person name="Martinez Zapater J.M."/>
            <person name="Lund S.T."/>
        </authorList>
    </citation>
    <scope>NUCLEOTIDE SEQUENCE [LARGE SCALE MRNA] OF 29-208</scope>
    <source>
        <strain>cv. Cabernet Sauvignon</strain>
        <tissue>Seed</tissue>
    </source>
</reference>
<reference key="3">
    <citation type="journal article" date="2014" name="Plant Physiol.">
        <title>Functional and evolutionary analysis of the CASPARIAN STRIP MEMBRANE DOMAIN PROTEIN family.</title>
        <authorList>
            <person name="Roppolo D."/>
            <person name="Boeckmann B."/>
            <person name="Pfister A."/>
            <person name="Boutet E."/>
            <person name="Rubio M.C."/>
            <person name="Denervaud-Tendon V."/>
            <person name="Vermeer J.E."/>
            <person name="Gheyselinck J."/>
            <person name="Xenarios I."/>
            <person name="Geldner N."/>
        </authorList>
    </citation>
    <scope>GENE FAMILY</scope>
    <scope>NOMENCLATURE</scope>
</reference>
<comment type="subunit">
    <text evidence="1">Homodimer and heterodimers.</text>
</comment>
<comment type="subcellular location">
    <subcellularLocation>
        <location evidence="1">Cell membrane</location>
        <topology evidence="1">Multi-pass membrane protein</topology>
    </subcellularLocation>
</comment>
<comment type="similarity">
    <text evidence="4">Belongs to the Casparian strip membrane proteins (CASP) family.</text>
</comment>
<feature type="chain" id="PRO_0000370316" description="CASP-like protein 1D1">
    <location>
        <begin position="1"/>
        <end position="208"/>
    </location>
</feature>
<feature type="topological domain" description="Cytoplasmic" evidence="2">
    <location>
        <begin position="1"/>
        <end position="41"/>
    </location>
</feature>
<feature type="transmembrane region" description="Helical" evidence="2">
    <location>
        <begin position="42"/>
        <end position="62"/>
    </location>
</feature>
<feature type="topological domain" description="Extracellular" evidence="2">
    <location>
        <begin position="63"/>
        <end position="89"/>
    </location>
</feature>
<feature type="transmembrane region" description="Helical" evidence="2">
    <location>
        <begin position="90"/>
        <end position="110"/>
    </location>
</feature>
<feature type="topological domain" description="Cytoplasmic" evidence="2">
    <location>
        <begin position="111"/>
        <end position="133"/>
    </location>
</feature>
<feature type="transmembrane region" description="Helical" evidence="2">
    <location>
        <begin position="134"/>
        <end position="154"/>
    </location>
</feature>
<feature type="topological domain" description="Extracellular" evidence="2">
    <location>
        <begin position="155"/>
        <end position="180"/>
    </location>
</feature>
<feature type="transmembrane region" description="Helical" evidence="2">
    <location>
        <begin position="181"/>
        <end position="201"/>
    </location>
</feature>
<feature type="topological domain" description="Cytoplasmic" evidence="2">
    <location>
        <begin position="202"/>
        <end position="208"/>
    </location>
</feature>
<feature type="region of interest" description="Disordered" evidence="3">
    <location>
        <begin position="1"/>
        <end position="36"/>
    </location>
</feature>
<feature type="compositionally biased region" description="Pro residues" evidence="3">
    <location>
        <begin position="9"/>
        <end position="36"/>
    </location>
</feature>
<feature type="sequence conflict" description="In Ref. 2; EC964015." evidence="4" ref="2">
    <original>V</original>
    <variation>I</variation>
    <location>
        <position position="153"/>
    </location>
</feature>
<feature type="sequence conflict" description="In Ref. 2; EC964015." evidence="4" ref="2">
    <original>F</original>
    <variation>Y</variation>
    <location>
        <position position="200"/>
    </location>
</feature>